<name>Y4FP_SINFN</name>
<gene>
    <name type="ordered locus">NGR_a03660</name>
    <name type="ORF">y4fP</name>
</gene>
<organism>
    <name type="scientific">Sinorhizobium fredii (strain NBRC 101917 / NGR234)</name>
    <dbReference type="NCBI Taxonomy" id="394"/>
    <lineage>
        <taxon>Bacteria</taxon>
        <taxon>Pseudomonadati</taxon>
        <taxon>Pseudomonadota</taxon>
        <taxon>Alphaproteobacteria</taxon>
        <taxon>Hyphomicrobiales</taxon>
        <taxon>Rhizobiaceae</taxon>
        <taxon>Sinorhizobium/Ensifer group</taxon>
        <taxon>Sinorhizobium</taxon>
    </lineage>
</organism>
<sequence>MRNVIKLTWSRRKRSASLDKGENIMKLAFAFATAAIVVAAAFPALADTLTVYSPQGGERGAWIAEQAKAAGHEIKLLNAGGGELYDRLIAEENNPQADVVLGMVDTSMALLKKEGLFQPYSPSWAKDLPAQYKDAEGLVHKFWQTPIVLAYYPDRLADPDAPKSWLDLTKDDYEGKYVIGSTAAQTTRMYLAGILVRFLDADGEVSDEGWDFLDRFYAEGIIANDADSQLEAFKSGRASIDLNWLGGALKRADDLDAKVQVIDTDGGTPVISEGVAIMAGTDQLDEAKAFVDWWGSADVMAAYAAKFGQVPVLPEALAKSPATVQANAKLVNTQPIDWDAIAPKLDSWLQKIELEIRQ</sequence>
<keyword id="KW-0574">Periplasm</keyword>
<keyword id="KW-0614">Plasmid</keyword>
<keyword id="KW-1185">Reference proteome</keyword>
<keyword id="KW-0732">Signal</keyword>
<keyword id="KW-0813">Transport</keyword>
<comment type="function">
    <text>Probably part of the binding-protein-dependent transport system y4fNOP.</text>
</comment>
<comment type="subcellular location">
    <subcellularLocation>
        <location evidence="2">Periplasm</location>
    </subcellularLocation>
</comment>
<comment type="similarity">
    <text evidence="2">Belongs to the bacterial solute-binding protein 1 family.</text>
</comment>
<comment type="caution">
    <text evidence="2">It is uncertain whether Met-1 is the initiator.</text>
</comment>
<dbReference type="EMBL" id="U00090">
    <property type="protein sequence ID" value="AAB91672.1"/>
    <property type="molecule type" value="Genomic_DNA"/>
</dbReference>
<dbReference type="RefSeq" id="NP_443860.1">
    <property type="nucleotide sequence ID" value="NC_000914.2"/>
</dbReference>
<dbReference type="SMR" id="P55454"/>
<dbReference type="KEGG" id="rhi:NGR_a03660"/>
<dbReference type="PATRIC" id="fig|394.7.peg.374"/>
<dbReference type="eggNOG" id="COG1840">
    <property type="taxonomic scope" value="Bacteria"/>
</dbReference>
<dbReference type="HOGENOM" id="CLU_026974_0_2_5"/>
<dbReference type="OrthoDB" id="9766989at2"/>
<dbReference type="Proteomes" id="UP000001054">
    <property type="component" value="Plasmid pNGR234a"/>
</dbReference>
<dbReference type="GO" id="GO:0030288">
    <property type="term" value="C:outer membrane-bounded periplasmic space"/>
    <property type="evidence" value="ECO:0007669"/>
    <property type="project" value="TreeGrafter"/>
</dbReference>
<dbReference type="GO" id="GO:0030975">
    <property type="term" value="F:thiamine binding"/>
    <property type="evidence" value="ECO:0007669"/>
    <property type="project" value="TreeGrafter"/>
</dbReference>
<dbReference type="GO" id="GO:0030976">
    <property type="term" value="F:thiamine pyrophosphate binding"/>
    <property type="evidence" value="ECO:0007669"/>
    <property type="project" value="TreeGrafter"/>
</dbReference>
<dbReference type="GO" id="GO:0015888">
    <property type="term" value="P:thiamine transport"/>
    <property type="evidence" value="ECO:0007669"/>
    <property type="project" value="TreeGrafter"/>
</dbReference>
<dbReference type="CDD" id="cd13551">
    <property type="entry name" value="PBP2_Fbp_like_5"/>
    <property type="match status" value="1"/>
</dbReference>
<dbReference type="Gene3D" id="3.40.190.10">
    <property type="entry name" value="Periplasmic binding protein-like II"/>
    <property type="match status" value="2"/>
</dbReference>
<dbReference type="InterPro" id="IPR026045">
    <property type="entry name" value="Ferric-bd"/>
</dbReference>
<dbReference type="InterPro" id="IPR006059">
    <property type="entry name" value="SBP"/>
</dbReference>
<dbReference type="PANTHER" id="PTHR30006:SF2">
    <property type="entry name" value="ABC TRANSPORTER SUBSTRATE-BINDING PROTEIN"/>
    <property type="match status" value="1"/>
</dbReference>
<dbReference type="PANTHER" id="PTHR30006">
    <property type="entry name" value="THIAMINE-BINDING PERIPLASMIC PROTEIN-RELATED"/>
    <property type="match status" value="1"/>
</dbReference>
<dbReference type="Pfam" id="PF01547">
    <property type="entry name" value="SBP_bac_1"/>
    <property type="match status" value="1"/>
</dbReference>
<dbReference type="PIRSF" id="PIRSF002825">
    <property type="entry name" value="CfbpA"/>
    <property type="match status" value="1"/>
</dbReference>
<dbReference type="SUPFAM" id="SSF53850">
    <property type="entry name" value="Periplasmic binding protein-like II"/>
    <property type="match status" value="1"/>
</dbReference>
<geneLocation type="plasmid">
    <name>sym pNGR234a</name>
</geneLocation>
<protein>
    <recommendedName>
        <fullName>Probable ABC transporter periplasmic-binding protein y4fP</fullName>
    </recommendedName>
</protein>
<feature type="signal peptide" evidence="1">
    <location>
        <begin position="1"/>
        <end position="46"/>
    </location>
</feature>
<feature type="chain" id="PRO_0000014164" description="Probable ABC transporter periplasmic-binding protein y4fP">
    <location>
        <begin position="47"/>
        <end position="358"/>
    </location>
</feature>
<accession>P55454</accession>
<evidence type="ECO:0000255" key="1"/>
<evidence type="ECO:0000305" key="2"/>
<proteinExistence type="inferred from homology"/>
<reference key="1">
    <citation type="journal article" date="1997" name="Nature">
        <title>Molecular basis of symbiosis between Rhizobium and legumes.</title>
        <authorList>
            <person name="Freiberg C.A."/>
            <person name="Fellay R."/>
            <person name="Bairoch A."/>
            <person name="Broughton W.J."/>
            <person name="Rosenthal A."/>
            <person name="Perret X."/>
        </authorList>
    </citation>
    <scope>NUCLEOTIDE SEQUENCE [LARGE SCALE GENOMIC DNA]</scope>
    <source>
        <strain>NBRC 101917 / NGR234</strain>
    </source>
</reference>
<reference key="2">
    <citation type="journal article" date="2009" name="Appl. Environ. Microbiol.">
        <title>Rhizobium sp. strain NGR234 possesses a remarkable number of secretion systems.</title>
        <authorList>
            <person name="Schmeisser C."/>
            <person name="Liesegang H."/>
            <person name="Krysciak D."/>
            <person name="Bakkou N."/>
            <person name="Le Quere A."/>
            <person name="Wollherr A."/>
            <person name="Heinemeyer I."/>
            <person name="Morgenstern B."/>
            <person name="Pommerening-Roeser A."/>
            <person name="Flores M."/>
            <person name="Palacios R."/>
            <person name="Brenner S."/>
            <person name="Gottschalk G."/>
            <person name="Schmitz R.A."/>
            <person name="Broughton W.J."/>
            <person name="Perret X."/>
            <person name="Strittmatter A.W."/>
            <person name="Streit W.R."/>
        </authorList>
    </citation>
    <scope>NUCLEOTIDE SEQUENCE [LARGE SCALE GENOMIC DNA]</scope>
    <source>
        <strain>NBRC 101917 / NGR234</strain>
    </source>
</reference>